<proteinExistence type="inferred from homology"/>
<reference key="1">
    <citation type="submission" date="2007-09" db="EMBL/GenBank/DDBJ databases">
        <title>Complete genome sequencing of Rickettsia bellii.</title>
        <authorList>
            <person name="Madan A."/>
            <person name="Lee H."/>
            <person name="Madan A."/>
            <person name="Yoon J.-G."/>
            <person name="Ryu G.-Y."/>
            <person name="Dasch G."/>
            <person name="Ereemeva M."/>
        </authorList>
    </citation>
    <scope>NUCLEOTIDE SEQUENCE [LARGE SCALE GENOMIC DNA]</scope>
    <source>
        <strain>OSU 85-389</strain>
    </source>
</reference>
<organism>
    <name type="scientific">Rickettsia bellii (strain OSU 85-389)</name>
    <dbReference type="NCBI Taxonomy" id="391896"/>
    <lineage>
        <taxon>Bacteria</taxon>
        <taxon>Pseudomonadati</taxon>
        <taxon>Pseudomonadota</taxon>
        <taxon>Alphaproteobacteria</taxon>
        <taxon>Rickettsiales</taxon>
        <taxon>Rickettsiaceae</taxon>
        <taxon>Rickettsieae</taxon>
        <taxon>Rickettsia</taxon>
        <taxon>belli group</taxon>
    </lineage>
</organism>
<accession>A8GUC7</accession>
<evidence type="ECO:0000255" key="1">
    <source>
        <dbReference type="HAMAP-Rule" id="MF_01810"/>
    </source>
</evidence>
<name>YIDC_RICB8</name>
<dbReference type="EMBL" id="CP000849">
    <property type="protein sequence ID" value="ABV78423.1"/>
    <property type="molecule type" value="Genomic_DNA"/>
</dbReference>
<dbReference type="RefSeq" id="WP_011476707.1">
    <property type="nucleotide sequence ID" value="NC_009883.1"/>
</dbReference>
<dbReference type="SMR" id="A8GUC7"/>
<dbReference type="KEGG" id="rbo:A1I_00055"/>
<dbReference type="HOGENOM" id="CLU_016535_1_0_5"/>
<dbReference type="GO" id="GO:0005886">
    <property type="term" value="C:plasma membrane"/>
    <property type="evidence" value="ECO:0007669"/>
    <property type="project" value="UniProtKB-SubCell"/>
</dbReference>
<dbReference type="GO" id="GO:0032977">
    <property type="term" value="F:membrane insertase activity"/>
    <property type="evidence" value="ECO:0007669"/>
    <property type="project" value="InterPro"/>
</dbReference>
<dbReference type="GO" id="GO:0051205">
    <property type="term" value="P:protein insertion into membrane"/>
    <property type="evidence" value="ECO:0007669"/>
    <property type="project" value="TreeGrafter"/>
</dbReference>
<dbReference type="GO" id="GO:0015031">
    <property type="term" value="P:protein transport"/>
    <property type="evidence" value="ECO:0007669"/>
    <property type="project" value="UniProtKB-KW"/>
</dbReference>
<dbReference type="CDD" id="cd20070">
    <property type="entry name" value="5TM_YidC_Alb3"/>
    <property type="match status" value="1"/>
</dbReference>
<dbReference type="CDD" id="cd19961">
    <property type="entry name" value="EcYidC-like_peri"/>
    <property type="match status" value="1"/>
</dbReference>
<dbReference type="Gene3D" id="2.70.98.90">
    <property type="match status" value="1"/>
</dbReference>
<dbReference type="HAMAP" id="MF_01810">
    <property type="entry name" value="YidC_type1"/>
    <property type="match status" value="1"/>
</dbReference>
<dbReference type="InterPro" id="IPR019998">
    <property type="entry name" value="Membr_insert_YidC"/>
</dbReference>
<dbReference type="InterPro" id="IPR028053">
    <property type="entry name" value="Membr_insert_YidC_N"/>
</dbReference>
<dbReference type="InterPro" id="IPR001708">
    <property type="entry name" value="YidC/ALB3/OXA1/COX18"/>
</dbReference>
<dbReference type="InterPro" id="IPR028055">
    <property type="entry name" value="YidC/Oxa/ALB_C"/>
</dbReference>
<dbReference type="InterPro" id="IPR047196">
    <property type="entry name" value="YidC_ALB_C"/>
</dbReference>
<dbReference type="InterPro" id="IPR038221">
    <property type="entry name" value="YidC_periplasmic_sf"/>
</dbReference>
<dbReference type="NCBIfam" id="NF002353">
    <property type="entry name" value="PRK01318.1-4"/>
    <property type="match status" value="1"/>
</dbReference>
<dbReference type="NCBIfam" id="TIGR03593">
    <property type="entry name" value="yidC_nterm"/>
    <property type="match status" value="1"/>
</dbReference>
<dbReference type="NCBIfam" id="TIGR03592">
    <property type="entry name" value="yidC_oxa1_cterm"/>
    <property type="match status" value="1"/>
</dbReference>
<dbReference type="PANTHER" id="PTHR12428:SF65">
    <property type="entry name" value="CYTOCHROME C OXIDASE ASSEMBLY PROTEIN COX18, MITOCHONDRIAL"/>
    <property type="match status" value="1"/>
</dbReference>
<dbReference type="PANTHER" id="PTHR12428">
    <property type="entry name" value="OXA1"/>
    <property type="match status" value="1"/>
</dbReference>
<dbReference type="Pfam" id="PF02096">
    <property type="entry name" value="60KD_IMP"/>
    <property type="match status" value="1"/>
</dbReference>
<dbReference type="Pfam" id="PF14849">
    <property type="entry name" value="YidC_periplas"/>
    <property type="match status" value="1"/>
</dbReference>
<dbReference type="PRINTS" id="PR00701">
    <property type="entry name" value="60KDINNERMP"/>
</dbReference>
<dbReference type="PRINTS" id="PR01900">
    <property type="entry name" value="YIDCPROTEIN"/>
</dbReference>
<comment type="function">
    <text evidence="1">Required for the insertion and/or proper folding and/or complex formation of integral membrane proteins into the membrane. Involved in integration of membrane proteins that insert both dependently and independently of the Sec translocase complex, as well as at least some lipoproteins. Aids folding of multispanning membrane proteins.</text>
</comment>
<comment type="subunit">
    <text evidence="1">Interacts with the Sec translocase complex via SecD. Specifically interacts with transmembrane segments of nascent integral membrane proteins during membrane integration.</text>
</comment>
<comment type="subcellular location">
    <subcellularLocation>
        <location evidence="1">Cell inner membrane</location>
        <topology evidence="1">Multi-pass membrane protein</topology>
    </subcellularLocation>
</comment>
<comment type="similarity">
    <text evidence="1">Belongs to the OXA1/ALB3/YidC family. Type 1 subfamily.</text>
</comment>
<feature type="chain" id="PRO_1000070155" description="Membrane protein insertase YidC">
    <location>
        <begin position="1"/>
        <end position="559"/>
    </location>
</feature>
<feature type="transmembrane region" description="Helical" evidence="1">
    <location>
        <begin position="5"/>
        <end position="25"/>
    </location>
</feature>
<feature type="transmembrane region" description="Helical" evidence="1">
    <location>
        <begin position="332"/>
        <end position="352"/>
    </location>
</feature>
<feature type="transmembrane region" description="Helical" evidence="1">
    <location>
        <begin position="355"/>
        <end position="375"/>
    </location>
</feature>
<feature type="transmembrane region" description="Helical" evidence="1">
    <location>
        <begin position="429"/>
        <end position="449"/>
    </location>
</feature>
<feature type="transmembrane region" description="Helical" evidence="1">
    <location>
        <begin position="474"/>
        <end position="494"/>
    </location>
</feature>
<feature type="transmembrane region" description="Helical" evidence="1">
    <location>
        <begin position="520"/>
        <end position="540"/>
    </location>
</feature>
<sequence>MNNNIVNLVAAIVLSLGIIFGWQYFIVKPQQQKQQQQIALQKAKDLKKKESAQLEATPVIVQEASQAPRIKIDSNALSGSISLKGLRFDDLILKKYKQDLSENSPEVVLFSPSDTKDAYFAEIGWVSNLSSVKLPNNETIWNSDSEILTPEKPVNLFWVNEDGVKFLVAITVDENYLFTIEQTIVNNSNQELPVQSYGLINRKYTAVEKAVNILHQGPIGCIDENLKEYSYDDIKDKKSEKFSASKVDWIGITDKYWLTSLIPDKSSNYSSNFNYAVKQEVERYQVDFISPVQIVKPGENFSIKGRLFAGAKKVDLLDKYEKQYDIKLFDRAIDFGWFYIITKPVFYAMNFFYKYVGNFGISILIVTVIIKLLMFTLANKSYRSMKRMKNLQPEINRIKNLYGDDKARLNQEIMALYKKEKVNPVAGCLPILVQIPVFFSIYKVLYVTIEMRQAPFYGWIKDLSAPDPTSIFNLFGLLHFSLPSFLMIGAWPILMAITMFLQQRMSPEPADPVQAQVMKFMPLVFLVMFSSFPAGLLIYWSWNNILSIIQQYYINKLDK</sequence>
<keyword id="KW-0997">Cell inner membrane</keyword>
<keyword id="KW-1003">Cell membrane</keyword>
<keyword id="KW-0143">Chaperone</keyword>
<keyword id="KW-0472">Membrane</keyword>
<keyword id="KW-0653">Protein transport</keyword>
<keyword id="KW-0812">Transmembrane</keyword>
<keyword id="KW-1133">Transmembrane helix</keyword>
<keyword id="KW-0813">Transport</keyword>
<gene>
    <name evidence="1" type="primary">yidC</name>
    <name type="ordered locus">A1I_00055</name>
</gene>
<protein>
    <recommendedName>
        <fullName evidence="1">Membrane protein insertase YidC</fullName>
    </recommendedName>
    <alternativeName>
        <fullName evidence="1">Foldase YidC</fullName>
    </alternativeName>
    <alternativeName>
        <fullName evidence="1">Membrane integrase YidC</fullName>
    </alternativeName>
    <alternativeName>
        <fullName evidence="1">Membrane protein YidC</fullName>
    </alternativeName>
</protein>